<comment type="catalytic activity">
    <reaction evidence="1">
        <text>L-aspartate + NH4(+) + ATP = L-asparagine + AMP + diphosphate + H(+)</text>
        <dbReference type="Rhea" id="RHEA:11372"/>
        <dbReference type="ChEBI" id="CHEBI:15378"/>
        <dbReference type="ChEBI" id="CHEBI:28938"/>
        <dbReference type="ChEBI" id="CHEBI:29991"/>
        <dbReference type="ChEBI" id="CHEBI:30616"/>
        <dbReference type="ChEBI" id="CHEBI:33019"/>
        <dbReference type="ChEBI" id="CHEBI:58048"/>
        <dbReference type="ChEBI" id="CHEBI:456215"/>
        <dbReference type="EC" id="6.3.1.1"/>
    </reaction>
</comment>
<comment type="pathway">
    <text evidence="1">Amino-acid biosynthesis; L-asparagine biosynthesis; L-asparagine from L-aspartate (ammonia route): step 1/1.</text>
</comment>
<comment type="subcellular location">
    <subcellularLocation>
        <location evidence="1">Cytoplasm</location>
    </subcellularLocation>
</comment>
<comment type="similarity">
    <text evidence="1">Belongs to the class-II aminoacyl-tRNA synthetase family. AsnA subfamily.</text>
</comment>
<organism>
    <name type="scientific">Bacillus cereus (strain AH820)</name>
    <dbReference type="NCBI Taxonomy" id="405535"/>
    <lineage>
        <taxon>Bacteria</taxon>
        <taxon>Bacillati</taxon>
        <taxon>Bacillota</taxon>
        <taxon>Bacilli</taxon>
        <taxon>Bacillales</taxon>
        <taxon>Bacillaceae</taxon>
        <taxon>Bacillus</taxon>
        <taxon>Bacillus cereus group</taxon>
    </lineage>
</organism>
<name>ASNA_BACC0</name>
<proteinExistence type="inferred from homology"/>
<sequence>MYQSLMTVRETQIAIKEVKTFFEDQLAKRLELFRVSAPLFVTKKSGLNDHLNGVERPIEFDMLHSGEELEIVHSLAKWKRFALHEYGYEAGEGLYTNMNAIRRDEELDATHSIYVDQWDWEKIVQKEWRTVDYLQKTVLTIYGIFKDLEDHLFEKYPFLGKYLPEEIVFVTSQELEDKYPELTPKDREHAIAKEHGAVFIIGIGDALRSGEKHDGRAADYDDWKLNGDILFWHPVLQSSFELSSMGIRVDSKSXDEQLTKTGEDFKREYDFHKGILEDVLPLTIGGGIGQSRMCMYFLRKAHIGEVQSSVWPDDLREACKKENIHLF</sequence>
<dbReference type="EC" id="6.3.1.1" evidence="1"/>
<dbReference type="EMBL" id="CP001283">
    <property type="protein sequence ID" value="ACK87214.1"/>
    <property type="molecule type" value="Genomic_DNA"/>
</dbReference>
<dbReference type="RefSeq" id="WP_000284911.1">
    <property type="nucleotide sequence ID" value="NC_011773.1"/>
</dbReference>
<dbReference type="KEGG" id="bcu:BCAH820_1853"/>
<dbReference type="HOGENOM" id="CLU_071543_0_0_9"/>
<dbReference type="UniPathway" id="UPA00134">
    <property type="reaction ID" value="UER00194"/>
</dbReference>
<dbReference type="Proteomes" id="UP000001363">
    <property type="component" value="Chromosome"/>
</dbReference>
<dbReference type="GO" id="GO:0005829">
    <property type="term" value="C:cytosol"/>
    <property type="evidence" value="ECO:0007669"/>
    <property type="project" value="TreeGrafter"/>
</dbReference>
<dbReference type="GO" id="GO:0004071">
    <property type="term" value="F:aspartate-ammonia ligase activity"/>
    <property type="evidence" value="ECO:0007669"/>
    <property type="project" value="UniProtKB-UniRule"/>
</dbReference>
<dbReference type="GO" id="GO:0005524">
    <property type="term" value="F:ATP binding"/>
    <property type="evidence" value="ECO:0007669"/>
    <property type="project" value="UniProtKB-UniRule"/>
</dbReference>
<dbReference type="GO" id="GO:0140096">
    <property type="term" value="F:catalytic activity, acting on a protein"/>
    <property type="evidence" value="ECO:0007669"/>
    <property type="project" value="UniProtKB-ARBA"/>
</dbReference>
<dbReference type="GO" id="GO:0016740">
    <property type="term" value="F:transferase activity"/>
    <property type="evidence" value="ECO:0007669"/>
    <property type="project" value="UniProtKB-ARBA"/>
</dbReference>
<dbReference type="GO" id="GO:0070981">
    <property type="term" value="P:L-asparagine biosynthetic process"/>
    <property type="evidence" value="ECO:0007669"/>
    <property type="project" value="UniProtKB-UniRule"/>
</dbReference>
<dbReference type="CDD" id="cd00645">
    <property type="entry name" value="AsnA"/>
    <property type="match status" value="1"/>
</dbReference>
<dbReference type="Gene3D" id="3.30.930.10">
    <property type="entry name" value="Bira Bifunctional Protein, Domain 2"/>
    <property type="match status" value="1"/>
</dbReference>
<dbReference type="HAMAP" id="MF_00555">
    <property type="entry name" value="AsnA"/>
    <property type="match status" value="1"/>
</dbReference>
<dbReference type="InterPro" id="IPR006195">
    <property type="entry name" value="aa-tRNA-synth_II"/>
</dbReference>
<dbReference type="InterPro" id="IPR045864">
    <property type="entry name" value="aa-tRNA-synth_II/BPL/LPL"/>
</dbReference>
<dbReference type="InterPro" id="IPR004618">
    <property type="entry name" value="AsnA"/>
</dbReference>
<dbReference type="NCBIfam" id="TIGR00669">
    <property type="entry name" value="asnA"/>
    <property type="match status" value="1"/>
</dbReference>
<dbReference type="PANTHER" id="PTHR30073">
    <property type="entry name" value="ASPARTATE--AMMONIA LIGASE"/>
    <property type="match status" value="1"/>
</dbReference>
<dbReference type="PANTHER" id="PTHR30073:SF5">
    <property type="entry name" value="ASPARTATE--AMMONIA LIGASE"/>
    <property type="match status" value="1"/>
</dbReference>
<dbReference type="Pfam" id="PF03590">
    <property type="entry name" value="AsnA"/>
    <property type="match status" value="1"/>
</dbReference>
<dbReference type="PIRSF" id="PIRSF001555">
    <property type="entry name" value="Asp_ammon_ligase"/>
    <property type="match status" value="1"/>
</dbReference>
<dbReference type="SUPFAM" id="SSF55681">
    <property type="entry name" value="Class II aaRS and biotin synthetases"/>
    <property type="match status" value="1"/>
</dbReference>
<dbReference type="PROSITE" id="PS50862">
    <property type="entry name" value="AA_TRNA_LIGASE_II"/>
    <property type="match status" value="1"/>
</dbReference>
<evidence type="ECO:0000255" key="1">
    <source>
        <dbReference type="HAMAP-Rule" id="MF_00555"/>
    </source>
</evidence>
<protein>
    <recommendedName>
        <fullName evidence="1">Aspartate--ammonia ligase</fullName>
        <ecNumber evidence="1">6.3.1.1</ecNumber>
    </recommendedName>
    <alternativeName>
        <fullName evidence="1">Asparagine synthetase A</fullName>
    </alternativeName>
</protein>
<feature type="chain" id="PRO_1000129106" description="Aspartate--ammonia ligase">
    <location>
        <begin position="1"/>
        <end position="327"/>
    </location>
</feature>
<reference key="1">
    <citation type="submission" date="2008-10" db="EMBL/GenBank/DDBJ databases">
        <title>Genome sequence of Bacillus cereus AH820.</title>
        <authorList>
            <person name="Dodson R.J."/>
            <person name="Durkin A.S."/>
            <person name="Rosovitz M.J."/>
            <person name="Rasko D.A."/>
            <person name="Hoffmaster A."/>
            <person name="Ravel J."/>
            <person name="Sutton G."/>
        </authorList>
    </citation>
    <scope>NUCLEOTIDE SEQUENCE [LARGE SCALE GENOMIC DNA]</scope>
    <source>
        <strain>AH820</strain>
    </source>
</reference>
<accession>B7JIX2</accession>
<keyword id="KW-0028">Amino-acid biosynthesis</keyword>
<keyword id="KW-0061">Asparagine biosynthesis</keyword>
<keyword id="KW-0067">ATP-binding</keyword>
<keyword id="KW-0963">Cytoplasm</keyword>
<keyword id="KW-0436">Ligase</keyword>
<keyword id="KW-0547">Nucleotide-binding</keyword>
<gene>
    <name evidence="1" type="primary">asnA</name>
    <name type="ordered locus">BCAH820_1853</name>
</gene>